<comment type="function">
    <text evidence="1">Part of the Sec protein translocase complex. Interacts with the SecYEG preprotein conducting channel. Has a central role in coupling the hydrolysis of ATP to the transfer of proteins into and across the cell membrane, serving as an ATP-driven molecular motor driving the stepwise translocation of polypeptide chains across the membrane.</text>
</comment>
<comment type="function">
    <text evidence="1">Probably participates in protein translocation into and across both the cytoplasmic and thylakoid membranes in cyanobacterial cells.</text>
</comment>
<comment type="catalytic activity">
    <reaction evidence="1">
        <text>ATP + H2O + cellular proteinSide 1 = ADP + phosphate + cellular proteinSide 2.</text>
        <dbReference type="EC" id="7.4.2.8"/>
    </reaction>
</comment>
<comment type="subunit">
    <text evidence="1">Monomer and homodimer. Part of the essential Sec protein translocation apparatus which comprises SecA, SecYEG and auxiliary proteins SecDF. Other proteins may also be involved.</text>
</comment>
<comment type="subcellular location">
    <subcellularLocation>
        <location evidence="1">Cell inner membrane</location>
        <topology evidence="1">Peripheral membrane protein</topology>
        <orientation evidence="1">Cytoplasmic side</orientation>
    </subcellularLocation>
    <subcellularLocation>
        <location evidence="1">Cellular thylakoid membrane</location>
        <topology evidence="1">Peripheral membrane protein</topology>
        <orientation evidence="1">Cytoplasmic side</orientation>
    </subcellularLocation>
    <subcellularLocation>
        <location evidence="1">Cytoplasm</location>
    </subcellularLocation>
</comment>
<comment type="similarity">
    <text evidence="1">Belongs to the SecA family.</text>
</comment>
<proteinExistence type="inferred from homology"/>
<protein>
    <recommendedName>
        <fullName evidence="1">Protein translocase subunit SecA</fullName>
        <ecNumber evidence="1">7.4.2.8</ecNumber>
    </recommendedName>
</protein>
<sequence length="932" mass="106141">MLKTLLGDPNKRKLKKYQPDVVEINLLEPEMQALSDQELQSKTGEFKRQLEQGKSLDELLPEAFAVVREASRRVLGLRHFDVQLLGGMILHDGQIAEMKTGEGKTLVSTLPAYLNALTGKGVQIITVNDYLARRDAEWMGQVHRFLGLSVGLIQQSMPPQERQKNYACDITYATNSEIGFDYLRDNMATSMAEVVLRPFHYCVIDEVDSVLIDEARTPLIISGQVERPTEKYLRATAIADALQKEEHYEVDEKARNILLTDEGFIEAEKLLGVKDLFDSQDPWAHYIFNAVKAKELFIKDVNYIIRGGEIVIVDEFTGRVMPGRRWSDGLHQAIEAKEGLDIQNESQTLATITYQNLFLLYPKLAGMTGTAKTEEAEFEKIYKLEVTVVPTNRATGRRDLPDVVYKNEMAKWRAVAAECAEFHQAGRPVLVGTTSVEKSEVLSQLLNQAGIPHNLLNAKPENVERESEIVAQAGRKGAVTIATNMAGRGTDIILGGNADYMARLKVREYFMPRIVMPESDDPLAMMRIMMGDGNASGGQGFAPQGNRPQKTWKASPNIFPTKLSRETEQLLKAAVDFAVKQYGERSIPELQAEDIVAIASEKAPTEDPVVQRLREAYNQIRSEYETFTHQEHDEVVQFGGLHVIGTERHESRRVDNQLRGRAGRQGDPGSTRFFLSLEDNLLRIFGGDRVAGLMNAFRVEEDMPIESRILTGSLENAQRKVETYYYDIRKQVFEYDDVMNNQRRAIYAERRRVLEGEDLKERVLEYAERTMDDIVEAYVNPDLPPEEWDLNSMVGKVKEFVNLLADLEPQQLEDLSMAEMQMFLHEQVRIAYDRKEAEIDQLQPGLMRQAERFFILQQIDTLWREHLQAMDALRESVGLRGYGQQDPLVEYKSEGYELFLDMMTAIRRNVVYSLFQFQPQYQPPEEMPSEVV</sequence>
<dbReference type="EC" id="7.4.2.8" evidence="1"/>
<dbReference type="EMBL" id="CP001344">
    <property type="protein sequence ID" value="ACL45978.1"/>
    <property type="molecule type" value="Genomic_DNA"/>
</dbReference>
<dbReference type="SMR" id="B8HSJ5"/>
<dbReference type="STRING" id="395961.Cyan7425_3658"/>
<dbReference type="KEGG" id="cyn:Cyan7425_3658"/>
<dbReference type="eggNOG" id="COG0653">
    <property type="taxonomic scope" value="Bacteria"/>
</dbReference>
<dbReference type="HOGENOM" id="CLU_005314_3_0_3"/>
<dbReference type="OrthoDB" id="9805579at2"/>
<dbReference type="GO" id="GO:0031522">
    <property type="term" value="C:cell envelope Sec protein transport complex"/>
    <property type="evidence" value="ECO:0007669"/>
    <property type="project" value="TreeGrafter"/>
</dbReference>
<dbReference type="GO" id="GO:0005829">
    <property type="term" value="C:cytosol"/>
    <property type="evidence" value="ECO:0007669"/>
    <property type="project" value="TreeGrafter"/>
</dbReference>
<dbReference type="GO" id="GO:0031676">
    <property type="term" value="C:plasma membrane-derived thylakoid membrane"/>
    <property type="evidence" value="ECO:0007669"/>
    <property type="project" value="UniProtKB-SubCell"/>
</dbReference>
<dbReference type="GO" id="GO:0005524">
    <property type="term" value="F:ATP binding"/>
    <property type="evidence" value="ECO:0007669"/>
    <property type="project" value="UniProtKB-UniRule"/>
</dbReference>
<dbReference type="GO" id="GO:0008564">
    <property type="term" value="F:protein-exporting ATPase activity"/>
    <property type="evidence" value="ECO:0007669"/>
    <property type="project" value="UniProtKB-EC"/>
</dbReference>
<dbReference type="GO" id="GO:0065002">
    <property type="term" value="P:intracellular protein transmembrane transport"/>
    <property type="evidence" value="ECO:0007669"/>
    <property type="project" value="UniProtKB-UniRule"/>
</dbReference>
<dbReference type="GO" id="GO:0017038">
    <property type="term" value="P:protein import"/>
    <property type="evidence" value="ECO:0007669"/>
    <property type="project" value="InterPro"/>
</dbReference>
<dbReference type="GO" id="GO:0006605">
    <property type="term" value="P:protein targeting"/>
    <property type="evidence" value="ECO:0007669"/>
    <property type="project" value="UniProtKB-UniRule"/>
</dbReference>
<dbReference type="GO" id="GO:0043952">
    <property type="term" value="P:protein transport by the Sec complex"/>
    <property type="evidence" value="ECO:0007669"/>
    <property type="project" value="TreeGrafter"/>
</dbReference>
<dbReference type="CDD" id="cd17928">
    <property type="entry name" value="DEXDc_SecA"/>
    <property type="match status" value="1"/>
</dbReference>
<dbReference type="CDD" id="cd18803">
    <property type="entry name" value="SF2_C_secA"/>
    <property type="match status" value="1"/>
</dbReference>
<dbReference type="FunFam" id="3.90.1440.10:FF:000003">
    <property type="entry name" value="Preprotein translocase SecA subunit"/>
    <property type="match status" value="1"/>
</dbReference>
<dbReference type="FunFam" id="3.40.50.300:FF:000429">
    <property type="entry name" value="Preprotein translocase subunit SecA"/>
    <property type="match status" value="1"/>
</dbReference>
<dbReference type="FunFam" id="1.10.3060.10:FF:000003">
    <property type="entry name" value="Protein translocase subunit SecA"/>
    <property type="match status" value="1"/>
</dbReference>
<dbReference type="FunFam" id="3.40.50.300:FF:000334">
    <property type="entry name" value="Protein translocase subunit SecA"/>
    <property type="match status" value="1"/>
</dbReference>
<dbReference type="Gene3D" id="1.10.3060.10">
    <property type="entry name" value="Helical scaffold and wing domains of SecA"/>
    <property type="match status" value="1"/>
</dbReference>
<dbReference type="Gene3D" id="3.40.50.300">
    <property type="entry name" value="P-loop containing nucleotide triphosphate hydrolases"/>
    <property type="match status" value="2"/>
</dbReference>
<dbReference type="Gene3D" id="3.90.1440.10">
    <property type="entry name" value="SecA, preprotein cross-linking domain"/>
    <property type="match status" value="1"/>
</dbReference>
<dbReference type="HAMAP" id="MF_01382">
    <property type="entry name" value="SecA"/>
    <property type="match status" value="1"/>
</dbReference>
<dbReference type="InterPro" id="IPR014001">
    <property type="entry name" value="Helicase_ATP-bd"/>
</dbReference>
<dbReference type="InterPro" id="IPR027417">
    <property type="entry name" value="P-loop_NTPase"/>
</dbReference>
<dbReference type="InterPro" id="IPR000185">
    <property type="entry name" value="SecA"/>
</dbReference>
<dbReference type="InterPro" id="IPR020937">
    <property type="entry name" value="SecA_CS"/>
</dbReference>
<dbReference type="InterPro" id="IPR011115">
    <property type="entry name" value="SecA_DEAD"/>
</dbReference>
<dbReference type="InterPro" id="IPR014018">
    <property type="entry name" value="SecA_motor_DEAD"/>
</dbReference>
<dbReference type="InterPro" id="IPR011130">
    <property type="entry name" value="SecA_preprotein_X-link_dom"/>
</dbReference>
<dbReference type="InterPro" id="IPR044722">
    <property type="entry name" value="SecA_SF2_C"/>
</dbReference>
<dbReference type="InterPro" id="IPR011116">
    <property type="entry name" value="SecA_Wing/Scaffold"/>
</dbReference>
<dbReference type="InterPro" id="IPR036266">
    <property type="entry name" value="SecA_Wing/Scaffold_sf"/>
</dbReference>
<dbReference type="InterPro" id="IPR036670">
    <property type="entry name" value="SecA_X-link_sf"/>
</dbReference>
<dbReference type="NCBIfam" id="TIGR00963">
    <property type="entry name" value="secA"/>
    <property type="match status" value="1"/>
</dbReference>
<dbReference type="PANTHER" id="PTHR30612:SF0">
    <property type="entry name" value="CHLOROPLAST PROTEIN-TRANSPORTING ATPASE"/>
    <property type="match status" value="1"/>
</dbReference>
<dbReference type="PANTHER" id="PTHR30612">
    <property type="entry name" value="SECA INNER MEMBRANE COMPONENT OF SEC PROTEIN SECRETION SYSTEM"/>
    <property type="match status" value="1"/>
</dbReference>
<dbReference type="Pfam" id="PF21090">
    <property type="entry name" value="P-loop_SecA"/>
    <property type="match status" value="1"/>
</dbReference>
<dbReference type="Pfam" id="PF07517">
    <property type="entry name" value="SecA_DEAD"/>
    <property type="match status" value="1"/>
</dbReference>
<dbReference type="Pfam" id="PF01043">
    <property type="entry name" value="SecA_PP_bind"/>
    <property type="match status" value="1"/>
</dbReference>
<dbReference type="Pfam" id="PF07516">
    <property type="entry name" value="SecA_SW"/>
    <property type="match status" value="1"/>
</dbReference>
<dbReference type="PRINTS" id="PR00906">
    <property type="entry name" value="SECA"/>
</dbReference>
<dbReference type="SMART" id="SM00957">
    <property type="entry name" value="SecA_DEAD"/>
    <property type="match status" value="1"/>
</dbReference>
<dbReference type="SMART" id="SM00958">
    <property type="entry name" value="SecA_PP_bind"/>
    <property type="match status" value="1"/>
</dbReference>
<dbReference type="SUPFAM" id="SSF81886">
    <property type="entry name" value="Helical scaffold and wing domains of SecA"/>
    <property type="match status" value="1"/>
</dbReference>
<dbReference type="SUPFAM" id="SSF52540">
    <property type="entry name" value="P-loop containing nucleoside triphosphate hydrolases"/>
    <property type="match status" value="2"/>
</dbReference>
<dbReference type="SUPFAM" id="SSF81767">
    <property type="entry name" value="Pre-protein crosslinking domain of SecA"/>
    <property type="match status" value="1"/>
</dbReference>
<dbReference type="PROSITE" id="PS01312">
    <property type="entry name" value="SECA"/>
    <property type="match status" value="1"/>
</dbReference>
<dbReference type="PROSITE" id="PS51196">
    <property type="entry name" value="SECA_MOTOR_DEAD"/>
    <property type="match status" value="1"/>
</dbReference>
<evidence type="ECO:0000255" key="1">
    <source>
        <dbReference type="HAMAP-Rule" id="MF_01382"/>
    </source>
</evidence>
<feature type="chain" id="PRO_1000184224" description="Protein translocase subunit SecA">
    <location>
        <begin position="1"/>
        <end position="932"/>
    </location>
</feature>
<feature type="binding site" evidence="1">
    <location>
        <position position="83"/>
    </location>
    <ligand>
        <name>ATP</name>
        <dbReference type="ChEBI" id="CHEBI:30616"/>
    </ligand>
</feature>
<feature type="binding site" evidence="1">
    <location>
        <begin position="101"/>
        <end position="105"/>
    </location>
    <ligand>
        <name>ATP</name>
        <dbReference type="ChEBI" id="CHEBI:30616"/>
    </ligand>
</feature>
<feature type="binding site" evidence="1">
    <location>
        <position position="491"/>
    </location>
    <ligand>
        <name>ATP</name>
        <dbReference type="ChEBI" id="CHEBI:30616"/>
    </ligand>
</feature>
<accession>B8HSJ5</accession>
<gene>
    <name evidence="1" type="primary">secA</name>
    <name type="ordered locus">Cyan7425_3658</name>
</gene>
<name>SECA_CYAP4</name>
<organism>
    <name type="scientific">Cyanothece sp. (strain PCC 7425 / ATCC 29141)</name>
    <dbReference type="NCBI Taxonomy" id="395961"/>
    <lineage>
        <taxon>Bacteria</taxon>
        <taxon>Bacillati</taxon>
        <taxon>Cyanobacteriota</taxon>
        <taxon>Cyanophyceae</taxon>
        <taxon>Gomontiellales</taxon>
        <taxon>Cyanothecaceae</taxon>
        <taxon>Cyanothece</taxon>
    </lineage>
</organism>
<reference key="1">
    <citation type="journal article" date="2011" name="MBio">
        <title>Novel metabolic attributes of the genus Cyanothece, comprising a group of unicellular nitrogen-fixing Cyanobacteria.</title>
        <authorList>
            <person name="Bandyopadhyay A."/>
            <person name="Elvitigala T."/>
            <person name="Welsh E."/>
            <person name="Stockel J."/>
            <person name="Liberton M."/>
            <person name="Min H."/>
            <person name="Sherman L.A."/>
            <person name="Pakrasi H.B."/>
        </authorList>
    </citation>
    <scope>NUCLEOTIDE SEQUENCE [LARGE SCALE GENOMIC DNA]</scope>
    <source>
        <strain>PCC 7425 / ATCC 29141</strain>
    </source>
</reference>
<keyword id="KW-0067">ATP-binding</keyword>
<keyword id="KW-0997">Cell inner membrane</keyword>
<keyword id="KW-1003">Cell membrane</keyword>
<keyword id="KW-0963">Cytoplasm</keyword>
<keyword id="KW-0472">Membrane</keyword>
<keyword id="KW-0547">Nucleotide-binding</keyword>
<keyword id="KW-0653">Protein transport</keyword>
<keyword id="KW-0793">Thylakoid</keyword>
<keyword id="KW-1278">Translocase</keyword>
<keyword id="KW-0811">Translocation</keyword>
<keyword id="KW-0813">Transport</keyword>